<dbReference type="EC" id="3.1.1.85" evidence="2"/>
<dbReference type="EMBL" id="CP000901">
    <property type="protein sequence ID" value="ABX86007.1"/>
    <property type="molecule type" value="Genomic_DNA"/>
</dbReference>
<dbReference type="RefSeq" id="WP_002208922.1">
    <property type="nucleotide sequence ID" value="NZ_CP009935.1"/>
</dbReference>
<dbReference type="SMR" id="A9R4D0"/>
<dbReference type="ESTHER" id="yerpe-BIOH">
    <property type="family name" value="BioH"/>
</dbReference>
<dbReference type="GeneID" id="57974471"/>
<dbReference type="KEGG" id="ypg:YpAngola_A3748"/>
<dbReference type="PATRIC" id="fig|349746.12.peg.455"/>
<dbReference type="UniPathway" id="UPA00078"/>
<dbReference type="GO" id="GO:0005737">
    <property type="term" value="C:cytoplasm"/>
    <property type="evidence" value="ECO:0007669"/>
    <property type="project" value="UniProtKB-SubCell"/>
</dbReference>
<dbReference type="GO" id="GO:0090499">
    <property type="term" value="F:pimelyl-[acyl-carrier protein] methyl ester esterase activity"/>
    <property type="evidence" value="ECO:0007669"/>
    <property type="project" value="UniProtKB-EC"/>
</dbReference>
<dbReference type="GO" id="GO:0009102">
    <property type="term" value="P:biotin biosynthetic process"/>
    <property type="evidence" value="ECO:0007669"/>
    <property type="project" value="UniProtKB-UniRule"/>
</dbReference>
<dbReference type="Gene3D" id="3.40.50.1820">
    <property type="entry name" value="alpha/beta hydrolase"/>
    <property type="match status" value="1"/>
</dbReference>
<dbReference type="HAMAP" id="MF_01260">
    <property type="entry name" value="Carboxylester"/>
    <property type="match status" value="1"/>
</dbReference>
<dbReference type="InterPro" id="IPR000073">
    <property type="entry name" value="AB_hydrolase_1"/>
</dbReference>
<dbReference type="InterPro" id="IPR029058">
    <property type="entry name" value="AB_hydrolase_fold"/>
</dbReference>
<dbReference type="InterPro" id="IPR010076">
    <property type="entry name" value="BioH"/>
</dbReference>
<dbReference type="InterPro" id="IPR050228">
    <property type="entry name" value="Carboxylesterase_BioH"/>
</dbReference>
<dbReference type="NCBIfam" id="TIGR01738">
    <property type="entry name" value="bioH"/>
    <property type="match status" value="1"/>
</dbReference>
<dbReference type="PANTHER" id="PTHR43194">
    <property type="entry name" value="HYDROLASE ALPHA/BETA FOLD FAMILY"/>
    <property type="match status" value="1"/>
</dbReference>
<dbReference type="PANTHER" id="PTHR43194:SF5">
    <property type="entry name" value="PIMELOYL-[ACYL-CARRIER PROTEIN] METHYL ESTER ESTERASE"/>
    <property type="match status" value="1"/>
</dbReference>
<dbReference type="Pfam" id="PF00561">
    <property type="entry name" value="Abhydrolase_1"/>
    <property type="match status" value="1"/>
</dbReference>
<dbReference type="SUPFAM" id="SSF53474">
    <property type="entry name" value="alpha/beta-Hydrolases"/>
    <property type="match status" value="1"/>
</dbReference>
<sequence>MKQLYWYTCGEGDCDLVLLHGWGLNSGVWHCIIDRLAPHFRLHLVDLPGYGRSQDYGAMSLADMAERVAQQAPKQALWLGWSMGGLVASQIALSQPECVRGLITVSSSPCFTARDEWPGIKPEVLAGFQHQLSDDFHRTVERFLALQTLGTESSRQDARLLKSVVLQHQMPDVEVLTGGLAILRTADLRTALAGFTLPFMRVYGHLDSLVPRKVASLLDSAWPQTQSVVMQGAAHAPFISHPNDFAKLILNFAEENKK</sequence>
<evidence type="ECO:0000255" key="1"/>
<evidence type="ECO:0000255" key="2">
    <source>
        <dbReference type="HAMAP-Rule" id="MF_01260"/>
    </source>
</evidence>
<protein>
    <recommendedName>
        <fullName evidence="2">Pimeloyl-[acyl-carrier protein] methyl ester esterase</fullName>
        <ecNumber evidence="2">3.1.1.85</ecNumber>
    </recommendedName>
    <alternativeName>
        <fullName evidence="2">Biotin synthesis protein BioH</fullName>
    </alternativeName>
    <alternativeName>
        <fullName evidence="2">Carboxylesterase BioH</fullName>
    </alternativeName>
</protein>
<gene>
    <name evidence="2" type="primary">bioH</name>
    <name type="ordered locus">YpAngola_A3748</name>
</gene>
<keyword id="KW-0093">Biotin biosynthesis</keyword>
<keyword id="KW-0963">Cytoplasm</keyword>
<keyword id="KW-0378">Hydrolase</keyword>
<keyword id="KW-0719">Serine esterase</keyword>
<reference key="1">
    <citation type="journal article" date="2010" name="J. Bacteriol.">
        <title>Genome sequence of the deep-rooted Yersinia pestis strain Angola reveals new insights into the evolution and pangenome of the plague bacterium.</title>
        <authorList>
            <person name="Eppinger M."/>
            <person name="Worsham P.L."/>
            <person name="Nikolich M.P."/>
            <person name="Riley D.R."/>
            <person name="Sebastian Y."/>
            <person name="Mou S."/>
            <person name="Achtman M."/>
            <person name="Lindler L.E."/>
            <person name="Ravel J."/>
        </authorList>
    </citation>
    <scope>NUCLEOTIDE SEQUENCE [LARGE SCALE GENOMIC DNA]</scope>
    <source>
        <strain>Angola</strain>
    </source>
</reference>
<organism>
    <name type="scientific">Yersinia pestis bv. Antiqua (strain Angola)</name>
    <dbReference type="NCBI Taxonomy" id="349746"/>
    <lineage>
        <taxon>Bacteria</taxon>
        <taxon>Pseudomonadati</taxon>
        <taxon>Pseudomonadota</taxon>
        <taxon>Gammaproteobacteria</taxon>
        <taxon>Enterobacterales</taxon>
        <taxon>Yersiniaceae</taxon>
        <taxon>Yersinia</taxon>
    </lineage>
</organism>
<name>BIOH_YERPG</name>
<feature type="chain" id="PRO_1000140013" description="Pimeloyl-[acyl-carrier protein] methyl ester esterase">
    <location>
        <begin position="1"/>
        <end position="258"/>
    </location>
</feature>
<feature type="domain" description="AB hydrolase-1" evidence="1">
    <location>
        <begin position="16"/>
        <end position="242"/>
    </location>
</feature>
<feature type="active site" description="Nucleophile" evidence="2">
    <location>
        <position position="82"/>
    </location>
</feature>
<feature type="active site" evidence="2">
    <location>
        <position position="207"/>
    </location>
</feature>
<feature type="active site" evidence="2">
    <location>
        <position position="235"/>
    </location>
</feature>
<feature type="binding site" evidence="2">
    <location>
        <position position="22"/>
    </location>
    <ligand>
        <name>substrate</name>
    </ligand>
</feature>
<feature type="binding site" evidence="2">
    <location>
        <begin position="82"/>
        <end position="83"/>
    </location>
    <ligand>
        <name>substrate</name>
    </ligand>
</feature>
<feature type="binding site" evidence="2">
    <location>
        <begin position="143"/>
        <end position="147"/>
    </location>
    <ligand>
        <name>substrate</name>
    </ligand>
</feature>
<feature type="binding site" evidence="2">
    <location>
        <position position="235"/>
    </location>
    <ligand>
        <name>substrate</name>
    </ligand>
</feature>
<accession>A9R4D0</accession>
<comment type="function">
    <text evidence="2">The physiological role of BioH is to remove the methyl group introduced by BioC when the pimeloyl moiety is complete. It allows to synthesize pimeloyl-ACP via the fatty acid synthetic pathway through the hydrolysis of the ester bonds of pimeloyl-ACP esters.</text>
</comment>
<comment type="catalytic activity">
    <reaction evidence="2">
        <text>6-carboxyhexanoyl-[ACP] methyl ester + H2O = 6-carboxyhexanoyl-[ACP] + methanol + H(+)</text>
        <dbReference type="Rhea" id="RHEA:42700"/>
        <dbReference type="Rhea" id="RHEA-COMP:9955"/>
        <dbReference type="Rhea" id="RHEA-COMP:10186"/>
        <dbReference type="ChEBI" id="CHEBI:15377"/>
        <dbReference type="ChEBI" id="CHEBI:15378"/>
        <dbReference type="ChEBI" id="CHEBI:17790"/>
        <dbReference type="ChEBI" id="CHEBI:78846"/>
        <dbReference type="ChEBI" id="CHEBI:82735"/>
        <dbReference type="EC" id="3.1.1.85"/>
    </reaction>
</comment>
<comment type="pathway">
    <text evidence="2">Cofactor biosynthesis; biotin biosynthesis.</text>
</comment>
<comment type="subunit">
    <text evidence="2">Monomer.</text>
</comment>
<comment type="subcellular location">
    <subcellularLocation>
        <location evidence="2">Cytoplasm</location>
    </subcellularLocation>
</comment>
<comment type="similarity">
    <text evidence="2">Belongs to the AB hydrolase superfamily. Carboxylesterase BioH family.</text>
</comment>
<proteinExistence type="inferred from homology"/>